<proteinExistence type="evidence at protein level"/>
<keyword id="KW-0106">Calcium</keyword>
<keyword id="KW-0256">Endoplasmic reticulum</keyword>
<keyword id="KW-0325">Glycoprotein</keyword>
<keyword id="KW-0413">Isomerase</keyword>
<keyword id="KW-0479">Metal-binding</keyword>
<keyword id="KW-0597">Phosphoprotein</keyword>
<keyword id="KW-1185">Reference proteome</keyword>
<keyword id="KW-0677">Repeat</keyword>
<keyword id="KW-0697">Rotamase</keyword>
<keyword id="KW-0732">Signal</keyword>
<name>FKBP9_MOUSE</name>
<protein>
    <recommendedName>
        <fullName>Peptidyl-prolyl cis-trans isomerase FKBP9</fullName>
        <shortName>PPIase FKBP9</shortName>
        <ecNumber>5.2.1.8</ecNumber>
    </recommendedName>
    <alternativeName>
        <fullName>63 kDa FK506-binding protein</fullName>
        <shortName>63 kDa FKBP</shortName>
        <shortName>FKBP-63</shortName>
    </alternativeName>
    <alternativeName>
        <fullName>FK506-binding protein 9</fullName>
        <shortName>FKBP-9</shortName>
    </alternativeName>
    <alternativeName>
        <fullName>FKBP65RS</fullName>
    </alternativeName>
    <alternativeName>
        <fullName>Rotamase</fullName>
    </alternativeName>
</protein>
<evidence type="ECO:0000255" key="1"/>
<evidence type="ECO:0000255" key="2">
    <source>
        <dbReference type="PROSITE-ProRule" id="PRU00277"/>
    </source>
</evidence>
<evidence type="ECO:0000255" key="3">
    <source>
        <dbReference type="PROSITE-ProRule" id="PRU00448"/>
    </source>
</evidence>
<evidence type="ECO:0000255" key="4">
    <source>
        <dbReference type="PROSITE-ProRule" id="PRU10138"/>
    </source>
</evidence>
<evidence type="ECO:0000269" key="5">
    <source>
    </source>
</evidence>
<evidence type="ECO:0000269" key="6">
    <source>
    </source>
</evidence>
<evidence type="ECO:0000269" key="7">
    <source>
    </source>
</evidence>
<evidence type="ECO:0000305" key="8"/>
<organism>
    <name type="scientific">Mus musculus</name>
    <name type="common">Mouse</name>
    <dbReference type="NCBI Taxonomy" id="10090"/>
    <lineage>
        <taxon>Eukaryota</taxon>
        <taxon>Metazoa</taxon>
        <taxon>Chordata</taxon>
        <taxon>Craniata</taxon>
        <taxon>Vertebrata</taxon>
        <taxon>Euteleostomi</taxon>
        <taxon>Mammalia</taxon>
        <taxon>Eutheria</taxon>
        <taxon>Euarchontoglires</taxon>
        <taxon>Glires</taxon>
        <taxon>Rodentia</taxon>
        <taxon>Myomorpha</taxon>
        <taxon>Muroidea</taxon>
        <taxon>Muridae</taxon>
        <taxon>Murinae</taxon>
        <taxon>Mus</taxon>
        <taxon>Mus</taxon>
    </lineage>
</organism>
<reference key="1">
    <citation type="journal article" date="1999" name="Biochim. Biophys. Acta">
        <title>Biochemical analysis of mouse FKBP60, a novel member of the FKBP family.</title>
        <authorList>
            <person name="Shadidy M."/>
            <person name="Caubit X."/>
            <person name="Olsen R."/>
            <person name="Seternes O.M."/>
            <person name="Moens U."/>
            <person name="Krauss S."/>
        </authorList>
    </citation>
    <scope>NUCLEOTIDE SEQUENCE [MRNA]</scope>
    <scope>ACTIVITY REGULATION</scope>
    <scope>SUBCELLULAR LOCATION</scope>
    <scope>TISSUE SPECIFICITY</scope>
    <scope>DEVELOPMENTAL STAGE</scope>
    <scope>CALCIUM-BINDING</scope>
</reference>
<reference key="2">
    <citation type="journal article" date="2001" name="Mol. Cells">
        <title>Identification and genetic mapping of the mouse Fkbp9 gene encoding a new member of FK506-binding protein family.</title>
        <authorList>
            <person name="Jo D."/>
            <person name="Lyu M.S."/>
            <person name="Cho E.-G."/>
            <person name="Park D."/>
            <person name="Kozak C.A."/>
            <person name="Kim M.G."/>
        </authorList>
    </citation>
    <scope>NUCLEOTIDE SEQUENCE [MRNA]</scope>
    <scope>TISSUE SPECIFICITY</scope>
    <source>
        <tissue>Thymus</tissue>
    </source>
</reference>
<reference key="3">
    <citation type="journal article" date="2004" name="Genome Res.">
        <title>The status, quality, and expansion of the NIH full-length cDNA project: the Mammalian Gene Collection (MGC).</title>
        <authorList>
            <consortium name="The MGC Project Team"/>
        </authorList>
    </citation>
    <scope>NUCLEOTIDE SEQUENCE [LARGE SCALE MRNA]</scope>
    <source>
        <strain>C57BL/6J</strain>
        <strain>Czech II</strain>
        <tissue>Fetal brain</tissue>
        <tissue>Mammary tumor</tissue>
    </source>
</reference>
<reference key="4">
    <citation type="journal article" date="2005" name="Science">
        <title>The transcriptional landscape of the mammalian genome.</title>
        <authorList>
            <person name="Carninci P."/>
            <person name="Kasukawa T."/>
            <person name="Katayama S."/>
            <person name="Gough J."/>
            <person name="Frith M.C."/>
            <person name="Maeda N."/>
            <person name="Oyama R."/>
            <person name="Ravasi T."/>
            <person name="Lenhard B."/>
            <person name="Wells C."/>
            <person name="Kodzius R."/>
            <person name="Shimokawa K."/>
            <person name="Bajic V.B."/>
            <person name="Brenner S.E."/>
            <person name="Batalov S."/>
            <person name="Forrest A.R."/>
            <person name="Zavolan M."/>
            <person name="Davis M.J."/>
            <person name="Wilming L.G."/>
            <person name="Aidinis V."/>
            <person name="Allen J.E."/>
            <person name="Ambesi-Impiombato A."/>
            <person name="Apweiler R."/>
            <person name="Aturaliya R.N."/>
            <person name="Bailey T.L."/>
            <person name="Bansal M."/>
            <person name="Baxter L."/>
            <person name="Beisel K.W."/>
            <person name="Bersano T."/>
            <person name="Bono H."/>
            <person name="Chalk A.M."/>
            <person name="Chiu K.P."/>
            <person name="Choudhary V."/>
            <person name="Christoffels A."/>
            <person name="Clutterbuck D.R."/>
            <person name="Crowe M.L."/>
            <person name="Dalla E."/>
            <person name="Dalrymple B.P."/>
            <person name="de Bono B."/>
            <person name="Della Gatta G."/>
            <person name="di Bernardo D."/>
            <person name="Down T."/>
            <person name="Engstrom P."/>
            <person name="Fagiolini M."/>
            <person name="Faulkner G."/>
            <person name="Fletcher C.F."/>
            <person name="Fukushima T."/>
            <person name="Furuno M."/>
            <person name="Futaki S."/>
            <person name="Gariboldi M."/>
            <person name="Georgii-Hemming P."/>
            <person name="Gingeras T.R."/>
            <person name="Gojobori T."/>
            <person name="Green R.E."/>
            <person name="Gustincich S."/>
            <person name="Harbers M."/>
            <person name="Hayashi Y."/>
            <person name="Hensch T.K."/>
            <person name="Hirokawa N."/>
            <person name="Hill D."/>
            <person name="Huminiecki L."/>
            <person name="Iacono M."/>
            <person name="Ikeo K."/>
            <person name="Iwama A."/>
            <person name="Ishikawa T."/>
            <person name="Jakt M."/>
            <person name="Kanapin A."/>
            <person name="Katoh M."/>
            <person name="Kawasawa Y."/>
            <person name="Kelso J."/>
            <person name="Kitamura H."/>
            <person name="Kitano H."/>
            <person name="Kollias G."/>
            <person name="Krishnan S.P."/>
            <person name="Kruger A."/>
            <person name="Kummerfeld S.K."/>
            <person name="Kurochkin I.V."/>
            <person name="Lareau L.F."/>
            <person name="Lazarevic D."/>
            <person name="Lipovich L."/>
            <person name="Liu J."/>
            <person name="Liuni S."/>
            <person name="McWilliam S."/>
            <person name="Madan Babu M."/>
            <person name="Madera M."/>
            <person name="Marchionni L."/>
            <person name="Matsuda H."/>
            <person name="Matsuzawa S."/>
            <person name="Miki H."/>
            <person name="Mignone F."/>
            <person name="Miyake S."/>
            <person name="Morris K."/>
            <person name="Mottagui-Tabar S."/>
            <person name="Mulder N."/>
            <person name="Nakano N."/>
            <person name="Nakauchi H."/>
            <person name="Ng P."/>
            <person name="Nilsson R."/>
            <person name="Nishiguchi S."/>
            <person name="Nishikawa S."/>
            <person name="Nori F."/>
            <person name="Ohara O."/>
            <person name="Okazaki Y."/>
            <person name="Orlando V."/>
            <person name="Pang K.C."/>
            <person name="Pavan W.J."/>
            <person name="Pavesi G."/>
            <person name="Pesole G."/>
            <person name="Petrovsky N."/>
            <person name="Piazza S."/>
            <person name="Reed J."/>
            <person name="Reid J.F."/>
            <person name="Ring B.Z."/>
            <person name="Ringwald M."/>
            <person name="Rost B."/>
            <person name="Ruan Y."/>
            <person name="Salzberg S.L."/>
            <person name="Sandelin A."/>
            <person name="Schneider C."/>
            <person name="Schoenbach C."/>
            <person name="Sekiguchi K."/>
            <person name="Semple C.A."/>
            <person name="Seno S."/>
            <person name="Sessa L."/>
            <person name="Sheng Y."/>
            <person name="Shibata Y."/>
            <person name="Shimada H."/>
            <person name="Shimada K."/>
            <person name="Silva D."/>
            <person name="Sinclair B."/>
            <person name="Sperling S."/>
            <person name="Stupka E."/>
            <person name="Sugiura K."/>
            <person name="Sultana R."/>
            <person name="Takenaka Y."/>
            <person name="Taki K."/>
            <person name="Tammoja K."/>
            <person name="Tan S.L."/>
            <person name="Tang S."/>
            <person name="Taylor M.S."/>
            <person name="Tegner J."/>
            <person name="Teichmann S.A."/>
            <person name="Ueda H.R."/>
            <person name="van Nimwegen E."/>
            <person name="Verardo R."/>
            <person name="Wei C.L."/>
            <person name="Yagi K."/>
            <person name="Yamanishi H."/>
            <person name="Zabarovsky E."/>
            <person name="Zhu S."/>
            <person name="Zimmer A."/>
            <person name="Hide W."/>
            <person name="Bult C."/>
            <person name="Grimmond S.M."/>
            <person name="Teasdale R.D."/>
            <person name="Liu E.T."/>
            <person name="Brusic V."/>
            <person name="Quackenbush J."/>
            <person name="Wahlestedt C."/>
            <person name="Mattick J.S."/>
            <person name="Hume D.A."/>
            <person name="Kai C."/>
            <person name="Sasaki D."/>
            <person name="Tomaru Y."/>
            <person name="Fukuda S."/>
            <person name="Kanamori-Katayama M."/>
            <person name="Suzuki M."/>
            <person name="Aoki J."/>
            <person name="Arakawa T."/>
            <person name="Iida J."/>
            <person name="Imamura K."/>
            <person name="Itoh M."/>
            <person name="Kato T."/>
            <person name="Kawaji H."/>
            <person name="Kawagashira N."/>
            <person name="Kawashima T."/>
            <person name="Kojima M."/>
            <person name="Kondo S."/>
            <person name="Konno H."/>
            <person name="Nakano K."/>
            <person name="Ninomiya N."/>
            <person name="Nishio T."/>
            <person name="Okada M."/>
            <person name="Plessy C."/>
            <person name="Shibata K."/>
            <person name="Shiraki T."/>
            <person name="Suzuki S."/>
            <person name="Tagami M."/>
            <person name="Waki K."/>
            <person name="Watahiki A."/>
            <person name="Okamura-Oho Y."/>
            <person name="Suzuki H."/>
            <person name="Kawai J."/>
            <person name="Hayashizaki Y."/>
        </authorList>
    </citation>
    <scope>NUCLEOTIDE SEQUENCE [LARGE SCALE MRNA] OF 155-570</scope>
    <source>
        <strain>C57BL/6J</strain>
        <tissue>Pancreas</tissue>
    </source>
</reference>
<reference key="5">
    <citation type="journal article" date="2009" name="Nat. Biotechnol.">
        <title>Mass-spectrometric identification and relative quantification of N-linked cell surface glycoproteins.</title>
        <authorList>
            <person name="Wollscheid B."/>
            <person name="Bausch-Fluck D."/>
            <person name="Henderson C."/>
            <person name="O'Brien R."/>
            <person name="Bibel M."/>
            <person name="Schiess R."/>
            <person name="Aebersold R."/>
            <person name="Watts J.D."/>
        </authorList>
    </citation>
    <scope>GLYCOSYLATION [LARGE SCALE ANALYSIS] AT ASN-174</scope>
</reference>
<reference key="6">
    <citation type="journal article" date="2010" name="Cell">
        <title>A tissue-specific atlas of mouse protein phosphorylation and expression.</title>
        <authorList>
            <person name="Huttlin E.L."/>
            <person name="Jedrychowski M.P."/>
            <person name="Elias J.E."/>
            <person name="Goswami T."/>
            <person name="Rad R."/>
            <person name="Beausoleil S.A."/>
            <person name="Villen J."/>
            <person name="Haas W."/>
            <person name="Sowa M.E."/>
            <person name="Gygi S.P."/>
        </authorList>
    </citation>
    <scope>IDENTIFICATION BY MASS SPECTROMETRY [LARGE SCALE ANALYSIS]</scope>
    <source>
        <tissue>Kidney</tissue>
        <tissue>Lung</tissue>
        <tissue>Testis</tissue>
    </source>
</reference>
<feature type="signal peptide" evidence="1">
    <location>
        <begin position="1"/>
        <end position="24"/>
    </location>
</feature>
<feature type="chain" id="PRO_0000025516" description="Peptidyl-prolyl cis-trans isomerase FKBP9">
    <location>
        <begin position="25"/>
        <end position="570"/>
    </location>
</feature>
<feature type="domain" description="PPIase FKBP-type 1" evidence="2">
    <location>
        <begin position="54"/>
        <end position="142"/>
    </location>
</feature>
<feature type="domain" description="PPIase FKBP-type 2" evidence="2">
    <location>
        <begin position="166"/>
        <end position="254"/>
    </location>
</feature>
<feature type="domain" description="PPIase FKBP-type 3" evidence="2">
    <location>
        <begin position="278"/>
        <end position="365"/>
    </location>
</feature>
<feature type="domain" description="PPIase FKBP-type 4" evidence="2">
    <location>
        <begin position="389"/>
        <end position="477"/>
    </location>
</feature>
<feature type="domain" description="EF-hand 1" evidence="3">
    <location>
        <begin position="488"/>
        <end position="523"/>
    </location>
</feature>
<feature type="domain" description="EF-hand 2" evidence="3">
    <location>
        <begin position="533"/>
        <end position="568"/>
    </location>
</feature>
<feature type="short sequence motif" description="Prevents secretion from ER" evidence="4">
    <location>
        <begin position="567"/>
        <end position="570"/>
    </location>
</feature>
<feature type="binding site" evidence="8">
    <location>
        <position position="501"/>
    </location>
    <ligand>
        <name>Ca(2+)</name>
        <dbReference type="ChEBI" id="CHEBI:29108"/>
        <label>1</label>
    </ligand>
</feature>
<feature type="binding site" evidence="8">
    <location>
        <position position="503"/>
    </location>
    <ligand>
        <name>Ca(2+)</name>
        <dbReference type="ChEBI" id="CHEBI:29108"/>
        <label>1</label>
    </ligand>
</feature>
<feature type="binding site" evidence="8">
    <location>
        <position position="505"/>
    </location>
    <ligand>
        <name>Ca(2+)</name>
        <dbReference type="ChEBI" id="CHEBI:29108"/>
        <label>1</label>
    </ligand>
</feature>
<feature type="binding site" evidence="8">
    <location>
        <position position="507"/>
    </location>
    <ligand>
        <name>Ca(2+)</name>
        <dbReference type="ChEBI" id="CHEBI:29108"/>
        <label>1</label>
    </ligand>
</feature>
<feature type="binding site" evidence="8">
    <location>
        <position position="512"/>
    </location>
    <ligand>
        <name>Ca(2+)</name>
        <dbReference type="ChEBI" id="CHEBI:29108"/>
        <label>1</label>
    </ligand>
</feature>
<feature type="binding site" evidence="3">
    <location>
        <position position="546"/>
    </location>
    <ligand>
        <name>Ca(2+)</name>
        <dbReference type="ChEBI" id="CHEBI:29108"/>
        <label>2</label>
    </ligand>
</feature>
<feature type="binding site" evidence="3">
    <location>
        <position position="548"/>
    </location>
    <ligand>
        <name>Ca(2+)</name>
        <dbReference type="ChEBI" id="CHEBI:29108"/>
        <label>2</label>
    </ligand>
</feature>
<feature type="binding site" evidence="3">
    <location>
        <position position="550"/>
    </location>
    <ligand>
        <name>Ca(2+)</name>
        <dbReference type="ChEBI" id="CHEBI:29108"/>
        <label>2</label>
    </ligand>
</feature>
<feature type="binding site" evidence="3">
    <location>
        <position position="552"/>
    </location>
    <ligand>
        <name>Ca(2+)</name>
        <dbReference type="ChEBI" id="CHEBI:29108"/>
        <label>2</label>
    </ligand>
</feature>
<feature type="binding site" evidence="3">
    <location>
        <position position="557"/>
    </location>
    <ligand>
        <name>Ca(2+)</name>
        <dbReference type="ChEBI" id="CHEBI:29108"/>
        <label>2</label>
    </ligand>
</feature>
<feature type="glycosylation site" description="N-linked (GlcNAc...) asparagine" evidence="7">
    <location>
        <position position="174"/>
    </location>
</feature>
<feature type="glycosylation site" description="N-linked (GlcNAc...) asparagine" evidence="1">
    <location>
        <position position="286"/>
    </location>
</feature>
<feature type="glycosylation site" description="N-linked (GlcNAc...) asparagine" evidence="1">
    <location>
        <position position="302"/>
    </location>
</feature>
<feature type="glycosylation site" description="N-linked (GlcNAc...) asparagine" evidence="1">
    <location>
        <position position="397"/>
    </location>
</feature>
<feature type="sequence conflict" description="In Ref. 3; AAH26133." evidence="8" ref="3">
    <original>Q</original>
    <variation>R</variation>
    <location>
        <position position="40"/>
    </location>
</feature>
<feature type="sequence conflict" description="In Ref. 3; AAH26133." evidence="8" ref="3">
    <original>H</original>
    <variation>Q</variation>
    <location>
        <position position="149"/>
    </location>
</feature>
<feature type="sequence conflict" description="In Ref. 2; AAF79215." evidence="8" ref="2">
    <original>DGK</original>
    <variation>NGE</variation>
    <location>
        <begin position="234"/>
        <end position="236"/>
    </location>
</feature>
<feature type="sequence conflict" description="In Ref. 4; BAB25071." evidence="8" ref="4">
    <original>G</original>
    <variation>S</variation>
    <location>
        <position position="321"/>
    </location>
</feature>
<feature type="sequence conflict" description="In Ref. 2; AAF79215." evidence="8" ref="2">
    <original>G</original>
    <variation>A</variation>
    <location>
        <position position="351"/>
    </location>
</feature>
<feature type="sequence conflict" description="In Ref. 4; BAB25071." evidence="8" ref="4">
    <original>A</original>
    <variation>T</variation>
    <location>
        <position position="353"/>
    </location>
</feature>
<feature type="sequence conflict" description="In Ref. 2; AAF79215." evidence="8" ref="2">
    <original>V</original>
    <variation>F</variation>
    <location>
        <position position="361"/>
    </location>
</feature>
<feature type="sequence conflict" description="In Ref. 2; AAF79215." evidence="8" ref="2">
    <original>F</original>
    <variation>V</variation>
    <location>
        <position position="364"/>
    </location>
</feature>
<feature type="sequence conflict" description="In Ref. 2; AAF79215." evidence="8" ref="2">
    <original>K</original>
    <variation>N</variation>
    <location>
        <position position="378"/>
    </location>
</feature>
<feature type="sequence conflict" description="In Ref. 2; AAF79215." evidence="8" ref="2">
    <original>S</original>
    <variation>I</variation>
    <location>
        <position position="386"/>
    </location>
</feature>
<feature type="sequence conflict" description="In Ref. 2; AAF79215." evidence="8" ref="2">
    <original>E</original>
    <variation>D</variation>
    <location>
        <position position="475"/>
    </location>
</feature>
<feature type="sequence conflict" description="In Ref. 3; AAH43129." evidence="8" ref="3">
    <original>N</original>
    <variation>S</variation>
    <location>
        <position position="548"/>
    </location>
</feature>
<feature type="sequence conflict" description="In Ref. 2; AAF79215." evidence="8" ref="2">
    <original>D</original>
    <variation>N</variation>
    <location>
        <position position="550"/>
    </location>
</feature>
<sequence>MALGARGWRRRSLLLLLLWVTGQAAPVLGLAVSSELQIQQSFVPDECPRTVHSGDFVRYHYVGTFLDGQKFDSSYDRDSTFNVFVGKGQLIAGMDQALVGMCVNERRLVTIPPNLAYGSEGVSGVIPPNSVLHFDVLLVDIWNSEDQVHIQTYFKPPSCPRTIQVSDFVRYHYNGTFLDGTLFDSSHNRMKTYDTYVGIGWLIPGMDKGLLGMCVGEKRIITVPPFLAYGEEGDGKDIPGQASLVFDVALLDLHNPKDTISIENKVVPENCERRSQSGDFLRYHYNGTLLDGTLFDSSYSRNHTFDTYIGQGYVIPGMDEGLLGVCIGERRRIVVPPHLGYGEKGRGSIPGSAVLVFDIHVIDFHNPSDSISITSHYKPPDCSVLSKKGDYLKYHYNASLLDGTLLDSTWNLGKTYNIVLGSGQVVLGMDMGLREMCVGEKRTVIIPPHLGYGEAGVDGEVPGSAVLVFDIELLELVSGLPEGYMFIWNGEVSPNLFEEIDRDGNGEVLLEEFSEYIHAQVATGKGKLAPGFNAEMIVKNMFTNQDRNGDGKVTAEEFKLKDQEAKHDEL</sequence>
<gene>
    <name type="primary">Fkbp9</name>
    <name type="synonym">Fkbp60</name>
    <name type="synonym">Fkbp63</name>
</gene>
<accession>Q9Z247</accession>
<accession>Q80ZZ6</accession>
<accession>Q8R386</accession>
<accession>Q9CVM0</accession>
<accession>Q9JHX5</accession>
<dbReference type="EC" id="5.2.1.8"/>
<dbReference type="EMBL" id="AF090334">
    <property type="protein sequence ID" value="AAC72964.1"/>
    <property type="molecule type" value="mRNA"/>
</dbReference>
<dbReference type="EMBL" id="AF279263">
    <property type="protein sequence ID" value="AAF79215.1"/>
    <property type="molecule type" value="mRNA"/>
</dbReference>
<dbReference type="EMBL" id="BC026133">
    <property type="protein sequence ID" value="AAH26133.1"/>
    <property type="molecule type" value="mRNA"/>
</dbReference>
<dbReference type="EMBL" id="BC043129">
    <property type="protein sequence ID" value="AAH43129.1"/>
    <property type="molecule type" value="mRNA"/>
</dbReference>
<dbReference type="EMBL" id="AK007499">
    <property type="protein sequence ID" value="BAB25071.1"/>
    <property type="molecule type" value="mRNA"/>
</dbReference>
<dbReference type="CCDS" id="CCDS39494.1"/>
<dbReference type="RefSeq" id="NP_036186.2">
    <property type="nucleotide sequence ID" value="NM_012056.2"/>
</dbReference>
<dbReference type="SMR" id="Q9Z247"/>
<dbReference type="BioGRID" id="205110">
    <property type="interactions" value="21"/>
</dbReference>
<dbReference type="FunCoup" id="Q9Z247">
    <property type="interactions" value="867"/>
</dbReference>
<dbReference type="IntAct" id="Q9Z247">
    <property type="interactions" value="2"/>
</dbReference>
<dbReference type="MINT" id="Q9Z247"/>
<dbReference type="STRING" id="10090.ENSMUSP00000031795"/>
<dbReference type="GlyConnect" id="2579">
    <property type="glycosylation" value="4 N-Linked glycans (2 sites)"/>
</dbReference>
<dbReference type="GlyCosmos" id="Q9Z247">
    <property type="glycosylation" value="4 sites, 4 glycans"/>
</dbReference>
<dbReference type="GlyGen" id="Q9Z247">
    <property type="glycosylation" value="4 sites, 6 N-linked glycans (3 sites)"/>
</dbReference>
<dbReference type="iPTMnet" id="Q9Z247"/>
<dbReference type="PhosphoSitePlus" id="Q9Z247"/>
<dbReference type="SwissPalm" id="Q9Z247"/>
<dbReference type="jPOST" id="Q9Z247"/>
<dbReference type="PaxDb" id="10090-ENSMUSP00000031795"/>
<dbReference type="PeptideAtlas" id="Q9Z247"/>
<dbReference type="ProteomicsDB" id="266852"/>
<dbReference type="Pumba" id="Q9Z247"/>
<dbReference type="Antibodypedia" id="2851">
    <property type="antibodies" value="79 antibodies from 23 providers"/>
</dbReference>
<dbReference type="DNASU" id="27055"/>
<dbReference type="Ensembl" id="ENSMUST00000031795.8">
    <property type="protein sequence ID" value="ENSMUSP00000031795.8"/>
    <property type="gene ID" value="ENSMUSG00000029781.8"/>
</dbReference>
<dbReference type="GeneID" id="27055"/>
<dbReference type="KEGG" id="mmu:27055"/>
<dbReference type="UCSC" id="uc009cbp.2">
    <property type="organism name" value="mouse"/>
</dbReference>
<dbReference type="AGR" id="MGI:1350921"/>
<dbReference type="CTD" id="11328"/>
<dbReference type="MGI" id="MGI:1350921">
    <property type="gene designation" value="Fkbp9"/>
</dbReference>
<dbReference type="VEuPathDB" id="HostDB:ENSMUSG00000029781"/>
<dbReference type="eggNOG" id="KOG0549">
    <property type="taxonomic scope" value="Eukaryota"/>
</dbReference>
<dbReference type="GeneTree" id="ENSGT00940000157125"/>
<dbReference type="HOGENOM" id="CLU_034907_0_0_1"/>
<dbReference type="InParanoid" id="Q9Z247"/>
<dbReference type="OMA" id="TVTYKPE"/>
<dbReference type="OrthoDB" id="1902587at2759"/>
<dbReference type="PhylomeDB" id="Q9Z247"/>
<dbReference type="TreeFam" id="TF105296"/>
<dbReference type="BioGRID-ORCS" id="27055">
    <property type="hits" value="0 hits in 78 CRISPR screens"/>
</dbReference>
<dbReference type="ChiTaRS" id="Fkbp9">
    <property type="organism name" value="mouse"/>
</dbReference>
<dbReference type="PRO" id="PR:Q9Z247"/>
<dbReference type="Proteomes" id="UP000000589">
    <property type="component" value="Chromosome 6"/>
</dbReference>
<dbReference type="RNAct" id="Q9Z247">
    <property type="molecule type" value="protein"/>
</dbReference>
<dbReference type="Bgee" id="ENSMUSG00000029781">
    <property type="expression patterns" value="Expressed in epithelium of cochlear duct and 296 other cell types or tissues"/>
</dbReference>
<dbReference type="GO" id="GO:0005783">
    <property type="term" value="C:endoplasmic reticulum"/>
    <property type="evidence" value="ECO:0000314"/>
    <property type="project" value="UniProtKB"/>
</dbReference>
<dbReference type="GO" id="GO:0005788">
    <property type="term" value="C:endoplasmic reticulum lumen"/>
    <property type="evidence" value="ECO:0007669"/>
    <property type="project" value="UniProtKB-SubCell"/>
</dbReference>
<dbReference type="GO" id="GO:0005509">
    <property type="term" value="F:calcium ion binding"/>
    <property type="evidence" value="ECO:0000314"/>
    <property type="project" value="UniProtKB"/>
</dbReference>
<dbReference type="GO" id="GO:0003755">
    <property type="term" value="F:peptidyl-prolyl cis-trans isomerase activity"/>
    <property type="evidence" value="ECO:0007669"/>
    <property type="project" value="UniProtKB-KW"/>
</dbReference>
<dbReference type="GO" id="GO:0006457">
    <property type="term" value="P:protein folding"/>
    <property type="evidence" value="ECO:0000314"/>
    <property type="project" value="UniProtKB"/>
</dbReference>
<dbReference type="CDD" id="cd00051">
    <property type="entry name" value="EFh"/>
    <property type="match status" value="1"/>
</dbReference>
<dbReference type="FunFam" id="1.10.238.10:FF:000102">
    <property type="entry name" value="Peptidylprolyl isomerase"/>
    <property type="match status" value="1"/>
</dbReference>
<dbReference type="FunFam" id="3.10.50.40:FF:000002">
    <property type="entry name" value="Peptidylprolyl isomerase"/>
    <property type="match status" value="4"/>
</dbReference>
<dbReference type="Gene3D" id="3.10.50.40">
    <property type="match status" value="4"/>
</dbReference>
<dbReference type="Gene3D" id="1.10.238.10">
    <property type="entry name" value="EF-hand"/>
    <property type="match status" value="1"/>
</dbReference>
<dbReference type="InterPro" id="IPR011992">
    <property type="entry name" value="EF-hand-dom_pair"/>
</dbReference>
<dbReference type="InterPro" id="IPR018247">
    <property type="entry name" value="EF_Hand_1_Ca_BS"/>
</dbReference>
<dbReference type="InterPro" id="IPR002048">
    <property type="entry name" value="EF_hand_dom"/>
</dbReference>
<dbReference type="InterPro" id="IPR051989">
    <property type="entry name" value="FKBP-like_isomerase"/>
</dbReference>
<dbReference type="InterPro" id="IPR046357">
    <property type="entry name" value="PPIase_dom_sf"/>
</dbReference>
<dbReference type="InterPro" id="IPR001179">
    <property type="entry name" value="PPIase_FKBP_dom"/>
</dbReference>
<dbReference type="PANTHER" id="PTHR46046:SF2">
    <property type="entry name" value="PEPTIDYL-PROLYL CIS-TRANS ISOMERASE FKBP9"/>
    <property type="match status" value="1"/>
</dbReference>
<dbReference type="PANTHER" id="PTHR46046">
    <property type="entry name" value="PEPTIDYLPROLYL ISOMERASE"/>
    <property type="match status" value="1"/>
</dbReference>
<dbReference type="Pfam" id="PF13202">
    <property type="entry name" value="EF-hand_5"/>
    <property type="match status" value="1"/>
</dbReference>
<dbReference type="Pfam" id="PF00254">
    <property type="entry name" value="FKBP_C"/>
    <property type="match status" value="4"/>
</dbReference>
<dbReference type="SMART" id="SM00054">
    <property type="entry name" value="EFh"/>
    <property type="match status" value="2"/>
</dbReference>
<dbReference type="SUPFAM" id="SSF47473">
    <property type="entry name" value="EF-hand"/>
    <property type="match status" value="1"/>
</dbReference>
<dbReference type="SUPFAM" id="SSF54534">
    <property type="entry name" value="FKBP-like"/>
    <property type="match status" value="4"/>
</dbReference>
<dbReference type="PROSITE" id="PS00018">
    <property type="entry name" value="EF_HAND_1"/>
    <property type="match status" value="1"/>
</dbReference>
<dbReference type="PROSITE" id="PS50222">
    <property type="entry name" value="EF_HAND_2"/>
    <property type="match status" value="2"/>
</dbReference>
<dbReference type="PROSITE" id="PS00014">
    <property type="entry name" value="ER_TARGET"/>
    <property type="match status" value="1"/>
</dbReference>
<dbReference type="PROSITE" id="PS50059">
    <property type="entry name" value="FKBP_PPIASE"/>
    <property type="match status" value="4"/>
</dbReference>
<comment type="function">
    <text>PPIases accelerate the folding of proteins during protein synthesis.</text>
</comment>
<comment type="catalytic activity">
    <reaction>
        <text>[protein]-peptidylproline (omega=180) = [protein]-peptidylproline (omega=0)</text>
        <dbReference type="Rhea" id="RHEA:16237"/>
        <dbReference type="Rhea" id="RHEA-COMP:10747"/>
        <dbReference type="Rhea" id="RHEA-COMP:10748"/>
        <dbReference type="ChEBI" id="CHEBI:83833"/>
        <dbReference type="ChEBI" id="CHEBI:83834"/>
        <dbReference type="EC" id="5.2.1.8"/>
    </reaction>
</comment>
<comment type="activity regulation">
    <text evidence="5">Inhibited by FK506.</text>
</comment>
<comment type="subcellular location">
    <subcellularLocation>
        <location evidence="4 5">Endoplasmic reticulum lumen</location>
    </subcellularLocation>
</comment>
<comment type="tissue specificity">
    <text evidence="5 6">Predominantly expressed in heart, skeletal muscle, lung, liver and kidney. Lower levels found in brain, spleen and testis.</text>
</comment>
<comment type="developmental stage">
    <text evidence="5">Expressed in all developmental stages.</text>
</comment>
<comment type="PTM">
    <text>Phosphorylated.</text>
</comment>